<protein>
    <recommendedName>
        <fullName evidence="1">Glutamate 5-kinase</fullName>
        <ecNumber evidence="1">2.7.2.11</ecNumber>
    </recommendedName>
    <alternativeName>
        <fullName evidence="1">Gamma-glutamyl kinase</fullName>
        <shortName evidence="1">GK</shortName>
    </alternativeName>
</protein>
<keyword id="KW-0028">Amino-acid biosynthesis</keyword>
<keyword id="KW-0067">ATP-binding</keyword>
<keyword id="KW-0963">Cytoplasm</keyword>
<keyword id="KW-0418">Kinase</keyword>
<keyword id="KW-0547">Nucleotide-binding</keyword>
<keyword id="KW-0641">Proline biosynthesis</keyword>
<keyword id="KW-1185">Reference proteome</keyword>
<keyword id="KW-0808">Transferase</keyword>
<reference key="1">
    <citation type="journal article" date="2013" name="Plant Physiol.">
        <title>A Nostoc punctiforme Sugar Transporter Necessary to Establish a Cyanobacterium-Plant Symbiosis.</title>
        <authorList>
            <person name="Ekman M."/>
            <person name="Picossi S."/>
            <person name="Campbell E.L."/>
            <person name="Meeks J.C."/>
            <person name="Flores E."/>
        </authorList>
    </citation>
    <scope>NUCLEOTIDE SEQUENCE [LARGE SCALE GENOMIC DNA]</scope>
    <source>
        <strain>ATCC 29133 / PCC 73102</strain>
    </source>
</reference>
<gene>
    <name evidence="1" type="primary">proB</name>
    <name type="ordered locus">Npun_F0328</name>
</gene>
<feature type="chain" id="PRO_1000125246" description="Glutamate 5-kinase">
    <location>
        <begin position="1"/>
        <end position="367"/>
    </location>
</feature>
<feature type="domain" description="PUA" evidence="1">
    <location>
        <begin position="275"/>
        <end position="353"/>
    </location>
</feature>
<feature type="binding site" evidence="1">
    <location>
        <position position="8"/>
    </location>
    <ligand>
        <name>ATP</name>
        <dbReference type="ChEBI" id="CHEBI:30616"/>
    </ligand>
</feature>
<feature type="binding site" evidence="1">
    <location>
        <position position="49"/>
    </location>
    <ligand>
        <name>substrate</name>
    </ligand>
</feature>
<feature type="binding site" evidence="1">
    <location>
        <position position="136"/>
    </location>
    <ligand>
        <name>substrate</name>
    </ligand>
</feature>
<feature type="binding site" evidence="1">
    <location>
        <position position="148"/>
    </location>
    <ligand>
        <name>substrate</name>
    </ligand>
</feature>
<feature type="binding site" evidence="1">
    <location>
        <begin position="168"/>
        <end position="169"/>
    </location>
    <ligand>
        <name>ATP</name>
        <dbReference type="ChEBI" id="CHEBI:30616"/>
    </ligand>
</feature>
<feature type="binding site" evidence="1">
    <location>
        <begin position="210"/>
        <end position="216"/>
    </location>
    <ligand>
        <name>ATP</name>
        <dbReference type="ChEBI" id="CHEBI:30616"/>
    </ligand>
</feature>
<organism>
    <name type="scientific">Nostoc punctiforme (strain ATCC 29133 / PCC 73102)</name>
    <dbReference type="NCBI Taxonomy" id="63737"/>
    <lineage>
        <taxon>Bacteria</taxon>
        <taxon>Bacillati</taxon>
        <taxon>Cyanobacteriota</taxon>
        <taxon>Cyanophyceae</taxon>
        <taxon>Nostocales</taxon>
        <taxon>Nostocaceae</taxon>
        <taxon>Nostoc</taxon>
    </lineage>
</organism>
<dbReference type="EC" id="2.7.2.11" evidence="1"/>
<dbReference type="EMBL" id="CP001037">
    <property type="protein sequence ID" value="ACC79111.1"/>
    <property type="molecule type" value="Genomic_DNA"/>
</dbReference>
<dbReference type="RefSeq" id="WP_012407137.1">
    <property type="nucleotide sequence ID" value="NC_010628.1"/>
</dbReference>
<dbReference type="SMR" id="B2J5U5"/>
<dbReference type="STRING" id="63737.Npun_F0328"/>
<dbReference type="EnsemblBacteria" id="ACC79111">
    <property type="protein sequence ID" value="ACC79111"/>
    <property type="gene ID" value="Npun_F0328"/>
</dbReference>
<dbReference type="KEGG" id="npu:Npun_F0328"/>
<dbReference type="eggNOG" id="COG0263">
    <property type="taxonomic scope" value="Bacteria"/>
</dbReference>
<dbReference type="HOGENOM" id="CLU_025400_2_0_3"/>
<dbReference type="OrthoDB" id="9804434at2"/>
<dbReference type="PhylomeDB" id="B2J5U5"/>
<dbReference type="UniPathway" id="UPA00098">
    <property type="reaction ID" value="UER00359"/>
</dbReference>
<dbReference type="Proteomes" id="UP000001191">
    <property type="component" value="Chromosome"/>
</dbReference>
<dbReference type="GO" id="GO:0005829">
    <property type="term" value="C:cytosol"/>
    <property type="evidence" value="ECO:0007669"/>
    <property type="project" value="TreeGrafter"/>
</dbReference>
<dbReference type="GO" id="GO:0005524">
    <property type="term" value="F:ATP binding"/>
    <property type="evidence" value="ECO:0007669"/>
    <property type="project" value="UniProtKB-KW"/>
</dbReference>
<dbReference type="GO" id="GO:0004349">
    <property type="term" value="F:glutamate 5-kinase activity"/>
    <property type="evidence" value="ECO:0007669"/>
    <property type="project" value="UniProtKB-UniRule"/>
</dbReference>
<dbReference type="GO" id="GO:0003723">
    <property type="term" value="F:RNA binding"/>
    <property type="evidence" value="ECO:0007669"/>
    <property type="project" value="InterPro"/>
</dbReference>
<dbReference type="GO" id="GO:0055129">
    <property type="term" value="P:L-proline biosynthetic process"/>
    <property type="evidence" value="ECO:0007669"/>
    <property type="project" value="UniProtKB-UniRule"/>
</dbReference>
<dbReference type="CDD" id="cd04242">
    <property type="entry name" value="AAK_G5K_ProB"/>
    <property type="match status" value="1"/>
</dbReference>
<dbReference type="CDD" id="cd21157">
    <property type="entry name" value="PUA_G5K"/>
    <property type="match status" value="1"/>
</dbReference>
<dbReference type="FunFam" id="2.30.130.10:FF:000007">
    <property type="entry name" value="Glutamate 5-kinase"/>
    <property type="match status" value="1"/>
</dbReference>
<dbReference type="FunFam" id="3.40.1160.10:FF:000018">
    <property type="entry name" value="Glutamate 5-kinase"/>
    <property type="match status" value="1"/>
</dbReference>
<dbReference type="Gene3D" id="3.40.1160.10">
    <property type="entry name" value="Acetylglutamate kinase-like"/>
    <property type="match status" value="2"/>
</dbReference>
<dbReference type="Gene3D" id="2.30.130.10">
    <property type="entry name" value="PUA domain"/>
    <property type="match status" value="1"/>
</dbReference>
<dbReference type="HAMAP" id="MF_00456">
    <property type="entry name" value="ProB"/>
    <property type="match status" value="1"/>
</dbReference>
<dbReference type="InterPro" id="IPR036393">
    <property type="entry name" value="AceGlu_kinase-like_sf"/>
</dbReference>
<dbReference type="InterPro" id="IPR001048">
    <property type="entry name" value="Asp/Glu/Uridylate_kinase"/>
</dbReference>
<dbReference type="InterPro" id="IPR041739">
    <property type="entry name" value="G5K_ProB"/>
</dbReference>
<dbReference type="InterPro" id="IPR001057">
    <property type="entry name" value="Glu/AcGlu_kinase"/>
</dbReference>
<dbReference type="InterPro" id="IPR011529">
    <property type="entry name" value="Glu_5kinase"/>
</dbReference>
<dbReference type="InterPro" id="IPR005715">
    <property type="entry name" value="Glu_5kinase/COase_Synthase"/>
</dbReference>
<dbReference type="InterPro" id="IPR019797">
    <property type="entry name" value="Glutamate_5-kinase_CS"/>
</dbReference>
<dbReference type="InterPro" id="IPR002478">
    <property type="entry name" value="PUA"/>
</dbReference>
<dbReference type="InterPro" id="IPR015947">
    <property type="entry name" value="PUA-like_sf"/>
</dbReference>
<dbReference type="InterPro" id="IPR036974">
    <property type="entry name" value="PUA_sf"/>
</dbReference>
<dbReference type="NCBIfam" id="TIGR01027">
    <property type="entry name" value="proB"/>
    <property type="match status" value="1"/>
</dbReference>
<dbReference type="PANTHER" id="PTHR43654">
    <property type="entry name" value="GLUTAMATE 5-KINASE"/>
    <property type="match status" value="1"/>
</dbReference>
<dbReference type="PANTHER" id="PTHR43654:SF3">
    <property type="entry name" value="GLUTAMATE 5-KINASE"/>
    <property type="match status" value="1"/>
</dbReference>
<dbReference type="Pfam" id="PF00696">
    <property type="entry name" value="AA_kinase"/>
    <property type="match status" value="1"/>
</dbReference>
<dbReference type="Pfam" id="PF01472">
    <property type="entry name" value="PUA"/>
    <property type="match status" value="1"/>
</dbReference>
<dbReference type="PIRSF" id="PIRSF000729">
    <property type="entry name" value="GK"/>
    <property type="match status" value="1"/>
</dbReference>
<dbReference type="PRINTS" id="PR00474">
    <property type="entry name" value="GLU5KINASE"/>
</dbReference>
<dbReference type="SMART" id="SM00359">
    <property type="entry name" value="PUA"/>
    <property type="match status" value="1"/>
</dbReference>
<dbReference type="SUPFAM" id="SSF53633">
    <property type="entry name" value="Carbamate kinase-like"/>
    <property type="match status" value="1"/>
</dbReference>
<dbReference type="SUPFAM" id="SSF88697">
    <property type="entry name" value="PUA domain-like"/>
    <property type="match status" value="1"/>
</dbReference>
<dbReference type="PROSITE" id="PS00902">
    <property type="entry name" value="GLUTAMATE_5_KINASE"/>
    <property type="match status" value="1"/>
</dbReference>
<dbReference type="PROSITE" id="PS50890">
    <property type="entry name" value="PUA"/>
    <property type="match status" value="1"/>
</dbReference>
<name>PROB_NOSP7</name>
<sequence length="367" mass="39379">MTKTIVVKIGTSSLTQAETGQLALSTIATLAETLCHLRSQGHRVILVSSGAVGVGCARLGLTERPRAIALKQAVAAVGQGRLIRIYDDLFTTLQQAIAQVLLTRSDLVQRSRYLNAYNTFQELLGLGVIPIVNENDTVAIDELKFGDNDTLSALVASLIEADWLFLLTDVDRLYSADPRSVPDARPIALVSSIKELAELQIGSQGSQWGTGGMVTKISAARIAIAAGVRTVITQGRFPQNIEKIIQGELIGTHFEPQPEPTSARKRWIAYGLLPAGKLYLDEGAIAAISLAGKSLLAAGIKLVEGEFDTQDAVQLCDSNGNEIARGLVNYNSNDLQKIRGCHSREISTILGYAGAETVIHRDNLVLI</sequence>
<comment type="function">
    <text evidence="1">Catalyzes the transfer of a phosphate group to glutamate to form L-glutamate 5-phosphate.</text>
</comment>
<comment type="catalytic activity">
    <reaction evidence="1">
        <text>L-glutamate + ATP = L-glutamyl 5-phosphate + ADP</text>
        <dbReference type="Rhea" id="RHEA:14877"/>
        <dbReference type="ChEBI" id="CHEBI:29985"/>
        <dbReference type="ChEBI" id="CHEBI:30616"/>
        <dbReference type="ChEBI" id="CHEBI:58274"/>
        <dbReference type="ChEBI" id="CHEBI:456216"/>
        <dbReference type="EC" id="2.7.2.11"/>
    </reaction>
</comment>
<comment type="pathway">
    <text evidence="1">Amino-acid biosynthesis; L-proline biosynthesis; L-glutamate 5-semialdehyde from L-glutamate: step 1/2.</text>
</comment>
<comment type="subcellular location">
    <subcellularLocation>
        <location evidence="1">Cytoplasm</location>
    </subcellularLocation>
</comment>
<comment type="similarity">
    <text evidence="1">Belongs to the glutamate 5-kinase family.</text>
</comment>
<evidence type="ECO:0000255" key="1">
    <source>
        <dbReference type="HAMAP-Rule" id="MF_00456"/>
    </source>
</evidence>
<accession>B2J5U5</accession>
<proteinExistence type="inferred from homology"/>